<feature type="chain" id="PRO_0000356451" description="Large ribosomal subunit protein bL33">
    <location>
        <begin position="1"/>
        <end position="49"/>
    </location>
</feature>
<gene>
    <name evidence="1" type="primary">rpmG</name>
    <name type="ordered locus">Dvul_0446</name>
</gene>
<reference key="1">
    <citation type="journal article" date="2009" name="Environ. Microbiol.">
        <title>Contribution of mobile genetic elements to Desulfovibrio vulgaris genome plasticity.</title>
        <authorList>
            <person name="Walker C.B."/>
            <person name="Stolyar S."/>
            <person name="Chivian D."/>
            <person name="Pinel N."/>
            <person name="Gabster J.A."/>
            <person name="Dehal P.S."/>
            <person name="He Z."/>
            <person name="Yang Z.K."/>
            <person name="Yen H.C."/>
            <person name="Zhou J."/>
            <person name="Wall J.D."/>
            <person name="Hazen T.C."/>
            <person name="Arkin A.P."/>
            <person name="Stahl D.A."/>
        </authorList>
    </citation>
    <scope>NUCLEOTIDE SEQUENCE [LARGE SCALE GENOMIC DNA]</scope>
    <source>
        <strain>DP4</strain>
    </source>
</reference>
<keyword id="KW-0687">Ribonucleoprotein</keyword>
<keyword id="KW-0689">Ribosomal protein</keyword>
<dbReference type="EMBL" id="CP000527">
    <property type="protein sequence ID" value="ABM27469.1"/>
    <property type="molecule type" value="Genomic_DNA"/>
</dbReference>
<dbReference type="RefSeq" id="WP_010940181.1">
    <property type="nucleotide sequence ID" value="NC_008751.1"/>
</dbReference>
<dbReference type="SMR" id="A1VAK3"/>
<dbReference type="KEGG" id="dvl:Dvul_0446"/>
<dbReference type="HOGENOM" id="CLU_190949_0_2_7"/>
<dbReference type="Proteomes" id="UP000009173">
    <property type="component" value="Chromosome"/>
</dbReference>
<dbReference type="GO" id="GO:0005737">
    <property type="term" value="C:cytoplasm"/>
    <property type="evidence" value="ECO:0007669"/>
    <property type="project" value="UniProtKB-ARBA"/>
</dbReference>
<dbReference type="GO" id="GO:1990904">
    <property type="term" value="C:ribonucleoprotein complex"/>
    <property type="evidence" value="ECO:0007669"/>
    <property type="project" value="UniProtKB-KW"/>
</dbReference>
<dbReference type="GO" id="GO:0005840">
    <property type="term" value="C:ribosome"/>
    <property type="evidence" value="ECO:0007669"/>
    <property type="project" value="UniProtKB-KW"/>
</dbReference>
<dbReference type="GO" id="GO:0003735">
    <property type="term" value="F:structural constituent of ribosome"/>
    <property type="evidence" value="ECO:0007669"/>
    <property type="project" value="InterPro"/>
</dbReference>
<dbReference type="GO" id="GO:0006412">
    <property type="term" value="P:translation"/>
    <property type="evidence" value="ECO:0007669"/>
    <property type="project" value="UniProtKB-UniRule"/>
</dbReference>
<dbReference type="Gene3D" id="2.20.28.120">
    <property type="entry name" value="Ribosomal protein L33"/>
    <property type="match status" value="1"/>
</dbReference>
<dbReference type="HAMAP" id="MF_00294">
    <property type="entry name" value="Ribosomal_bL33"/>
    <property type="match status" value="1"/>
</dbReference>
<dbReference type="InterPro" id="IPR001705">
    <property type="entry name" value="Ribosomal_bL33"/>
</dbReference>
<dbReference type="InterPro" id="IPR018264">
    <property type="entry name" value="Ribosomal_bL33_CS"/>
</dbReference>
<dbReference type="InterPro" id="IPR038584">
    <property type="entry name" value="Ribosomal_bL33_sf"/>
</dbReference>
<dbReference type="InterPro" id="IPR011332">
    <property type="entry name" value="Ribosomal_zn-bd"/>
</dbReference>
<dbReference type="NCBIfam" id="NF001764">
    <property type="entry name" value="PRK00504.1"/>
    <property type="match status" value="1"/>
</dbReference>
<dbReference type="NCBIfam" id="NF001860">
    <property type="entry name" value="PRK00595.1"/>
    <property type="match status" value="1"/>
</dbReference>
<dbReference type="NCBIfam" id="TIGR01023">
    <property type="entry name" value="rpmG_bact"/>
    <property type="match status" value="1"/>
</dbReference>
<dbReference type="PANTHER" id="PTHR43168">
    <property type="entry name" value="50S RIBOSOMAL PROTEIN L33, CHLOROPLASTIC"/>
    <property type="match status" value="1"/>
</dbReference>
<dbReference type="PANTHER" id="PTHR43168:SF2">
    <property type="entry name" value="LARGE RIBOSOMAL SUBUNIT PROTEIN BL33C"/>
    <property type="match status" value="1"/>
</dbReference>
<dbReference type="Pfam" id="PF00471">
    <property type="entry name" value="Ribosomal_L33"/>
    <property type="match status" value="1"/>
</dbReference>
<dbReference type="SUPFAM" id="SSF57829">
    <property type="entry name" value="Zn-binding ribosomal proteins"/>
    <property type="match status" value="1"/>
</dbReference>
<dbReference type="PROSITE" id="PS00582">
    <property type="entry name" value="RIBOSOMAL_L33"/>
    <property type="match status" value="1"/>
</dbReference>
<accession>A1VAK3</accession>
<organism>
    <name type="scientific">Nitratidesulfovibrio vulgaris (strain DP4)</name>
    <name type="common">Desulfovibrio vulgaris</name>
    <dbReference type="NCBI Taxonomy" id="391774"/>
    <lineage>
        <taxon>Bacteria</taxon>
        <taxon>Pseudomonadati</taxon>
        <taxon>Thermodesulfobacteriota</taxon>
        <taxon>Desulfovibrionia</taxon>
        <taxon>Desulfovibrionales</taxon>
        <taxon>Desulfovibrionaceae</taxon>
        <taxon>Nitratidesulfovibrio</taxon>
    </lineage>
</organism>
<protein>
    <recommendedName>
        <fullName evidence="1">Large ribosomal subunit protein bL33</fullName>
    </recommendedName>
    <alternativeName>
        <fullName evidence="2">50S ribosomal protein L33</fullName>
    </alternativeName>
</protein>
<sequence>MRVNIQLACTECKRRNYATDKNKKNTTGRLELKKYCPWDKKHTVHRETK</sequence>
<comment type="similarity">
    <text evidence="1">Belongs to the bacterial ribosomal protein bL33 family.</text>
</comment>
<proteinExistence type="inferred from homology"/>
<evidence type="ECO:0000255" key="1">
    <source>
        <dbReference type="HAMAP-Rule" id="MF_00294"/>
    </source>
</evidence>
<evidence type="ECO:0000305" key="2"/>
<name>RL33_NITV4</name>